<feature type="peptide" id="PRO_0000043428" description="Hypertrehalosaemic factor 2">
    <location>
        <begin position="1"/>
        <end position="8"/>
    </location>
</feature>
<feature type="modified residue" description="Pyrrolidone carboxylic acid" evidence="1">
    <location>
        <position position="1"/>
    </location>
</feature>
<feature type="modified residue" description="Tryptophan amide" evidence="1">
    <location>
        <position position="8"/>
    </location>
</feature>
<dbReference type="PIR" id="S08996">
    <property type="entry name" value="S08996"/>
</dbReference>
<dbReference type="GO" id="GO:0005576">
    <property type="term" value="C:extracellular region"/>
    <property type="evidence" value="ECO:0007669"/>
    <property type="project" value="UniProtKB-SubCell"/>
</dbReference>
<dbReference type="GO" id="GO:0005179">
    <property type="term" value="F:hormone activity"/>
    <property type="evidence" value="ECO:0007669"/>
    <property type="project" value="UniProtKB-KW"/>
</dbReference>
<dbReference type="GO" id="GO:0007218">
    <property type="term" value="P:neuropeptide signaling pathway"/>
    <property type="evidence" value="ECO:0007669"/>
    <property type="project" value="UniProtKB-KW"/>
</dbReference>
<dbReference type="InterPro" id="IPR002047">
    <property type="entry name" value="Adipokinetic_hormone_CS"/>
</dbReference>
<dbReference type="PROSITE" id="PS00256">
    <property type="entry name" value="AKH"/>
    <property type="match status" value="1"/>
</dbReference>
<organism>
    <name type="scientific">Blatta orientalis</name>
    <name type="common">Oriental cockroach</name>
    <dbReference type="NCBI Taxonomy" id="6976"/>
    <lineage>
        <taxon>Eukaryota</taxon>
        <taxon>Metazoa</taxon>
        <taxon>Ecdysozoa</taxon>
        <taxon>Arthropoda</taxon>
        <taxon>Hexapoda</taxon>
        <taxon>Insecta</taxon>
        <taxon>Pterygota</taxon>
        <taxon>Neoptera</taxon>
        <taxon>Polyneoptera</taxon>
        <taxon>Dictyoptera</taxon>
        <taxon>Blattodea</taxon>
        <taxon>Blattoidea</taxon>
        <taxon>Blattidae</taxon>
        <taxon>Blattinae</taxon>
        <taxon>Blatta</taxon>
    </lineage>
</organism>
<proteinExistence type="evidence at protein level"/>
<protein>
    <recommendedName>
        <fullName>Hypertrehalosaemic factor 2</fullName>
    </recommendedName>
    <alternativeName>
        <fullName>Hypertrehalosaemic factor II</fullName>
    </alternativeName>
    <alternativeName>
        <fullName>Hypertrehalosaemic neuropeptide II</fullName>
    </alternativeName>
</protein>
<keyword id="KW-0027">Amidation</keyword>
<keyword id="KW-0903">Direct protein sequencing</keyword>
<keyword id="KW-0372">Hormone</keyword>
<keyword id="KW-0527">Neuropeptide</keyword>
<keyword id="KW-0873">Pyrrolidone carboxylic acid</keyword>
<keyword id="KW-0964">Secreted</keyword>
<evidence type="ECO:0000269" key="1">
    <source>
    </source>
</evidence>
<evidence type="ECO:0000305" key="2"/>
<comment type="function">
    <text evidence="1">Hypertrehalosaemic factors are neuropeptides that elevate the level of trehalose in the hemolymph (trehalose is the major carbohydrate in the hemolymph of insects).</text>
</comment>
<comment type="subcellular location">
    <subcellularLocation>
        <location evidence="1">Secreted</location>
    </subcellularLocation>
</comment>
<comment type="similarity">
    <text evidence="2">Belongs to the AKH/HRTH/RPCH family.</text>
</comment>
<reference key="1">
    <citation type="journal article" date="1990" name="Biol. Chem. Hoppe-Seyler">
        <title>Primary structures of hypertrehalosaemic neuropeptides isolated from the corpora cardiaca of the cockroaches Leucophaea maderae, Gromphadorhina portentosa, Blattella germanica and Blatta orientalis and of the stick insect Extatosoma tiaratum assigned by tandem fast atom bombardment mass spectrometry.</title>
        <authorList>
            <person name="Gaede G."/>
            <person name="Rinehart K.L. Jr."/>
        </authorList>
    </citation>
    <scope>PROTEIN SEQUENCE</scope>
    <scope>FUNCTION</scope>
    <scope>PYROGLUTAMATE FORMATION AT GLN-1</scope>
    <scope>AMIDATION AT TRP-8</scope>
    <scope>SUBCELLULAR LOCATION</scope>
    <source>
        <tissue>Corpora cardiaca</tissue>
    </source>
</reference>
<sequence length="8" mass="1006">QLTFTPNW</sequence>
<accession>P84258</accession>
<accession>P04549</accession>
<name>HTF2_BLAOR</name>